<gene>
    <name type="primary">tmem135</name>
</gene>
<proteinExistence type="evidence at transcript level"/>
<keyword id="KW-0472">Membrane</keyword>
<keyword id="KW-0496">Mitochondrion</keyword>
<keyword id="KW-0576">Peroxisome</keyword>
<keyword id="KW-1185">Reference proteome</keyword>
<keyword id="KW-0812">Transmembrane</keyword>
<keyword id="KW-1133">Transmembrane helix</keyword>
<name>TM135_XENLA</name>
<organism>
    <name type="scientific">Xenopus laevis</name>
    <name type="common">African clawed frog</name>
    <dbReference type="NCBI Taxonomy" id="8355"/>
    <lineage>
        <taxon>Eukaryota</taxon>
        <taxon>Metazoa</taxon>
        <taxon>Chordata</taxon>
        <taxon>Craniata</taxon>
        <taxon>Vertebrata</taxon>
        <taxon>Euteleostomi</taxon>
        <taxon>Amphibia</taxon>
        <taxon>Batrachia</taxon>
        <taxon>Anura</taxon>
        <taxon>Pipoidea</taxon>
        <taxon>Pipidae</taxon>
        <taxon>Xenopodinae</taxon>
        <taxon>Xenopus</taxon>
        <taxon>Xenopus</taxon>
    </lineage>
</organism>
<reference key="1">
    <citation type="submission" date="2004-06" db="EMBL/GenBank/DDBJ databases">
        <authorList>
            <consortium name="NIH - Xenopus Gene Collection (XGC) project"/>
        </authorList>
    </citation>
    <scope>NUCLEOTIDE SEQUENCE [LARGE SCALE MRNA]</scope>
    <source>
        <tissue>Ovary</tissue>
    </source>
</reference>
<comment type="function">
    <text evidence="1 2">Involved in mitochondrial metabolism by regulating the balance between mitochondrial fusion and fission. May act as a regulator of mitochondrial fission that promotes DNM1L-dependent fission through activation of DNM1L. May be involved in peroxisome organization.</text>
</comment>
<comment type="subcellular location">
    <subcellularLocation>
        <location evidence="2">Mitochondrion membrane</location>
        <topology evidence="2">Multi-pass membrane protein</topology>
    </subcellularLocation>
    <subcellularLocation>
        <location evidence="2">Peroxisome membrane</location>
        <topology evidence="3">Multi-pass membrane protein</topology>
    </subcellularLocation>
</comment>
<comment type="similarity">
    <text evidence="4">Belongs to the TMEM135 family.</text>
</comment>
<feature type="chain" id="PRO_0000284625" description="Transmembrane protein 135">
    <location>
        <begin position="1"/>
        <end position="453"/>
    </location>
</feature>
<feature type="transmembrane region" description="Helical" evidence="3">
    <location>
        <begin position="68"/>
        <end position="88"/>
    </location>
</feature>
<feature type="transmembrane region" description="Helical" evidence="3">
    <location>
        <begin position="96"/>
        <end position="116"/>
    </location>
</feature>
<feature type="transmembrane region" description="Helical" evidence="3">
    <location>
        <begin position="149"/>
        <end position="169"/>
    </location>
</feature>
<feature type="transmembrane region" description="Helical" evidence="3">
    <location>
        <begin position="293"/>
        <end position="313"/>
    </location>
</feature>
<feature type="transmembrane region" description="Helical" evidence="3">
    <location>
        <begin position="326"/>
        <end position="346"/>
    </location>
</feature>
<sequence>MAALSKSIPHSCYEIGHTWNPSCFGSYLQITQGAMEESFKIYAPLYLVAAILRRKNLDYYVHKLLPELLQSTSFLTANGSLYIAFFCILRKLLGRFYFWTPGFGAALPASYAAILIERKSRRGLLTIYMANQATEALFRMGVTRGYIKPIRHGEVLLFCITSALYMFFFRCRDGLKGFAFSALKFIVGKEEIPAHALLPENMYVKAEQKSKEHRGLSRNSLKRLMDIICKHGPRHRCCKHYEDNCISYCIKGFIRMFSIGYLIQCCLRIPSTFRHLFTKPSRLLSLFYNKENFQLGAFLGSFVSIYKGTSCFLRWVRNLDDELHALVAGFLAGISMMFYKSTTISMYLASKLVETMYFKGIEAGKCPYFPHADSVIYAVSTAVCFHAAVMEVQNLRPSYWKFLQRLTKGRFALMNRKALDVFDSEASKNFNNFVPKLDPRFCIVKPELPLDFS</sequence>
<dbReference type="EMBL" id="BC072909">
    <property type="protein sequence ID" value="AAH72909.1"/>
    <property type="molecule type" value="mRNA"/>
</dbReference>
<dbReference type="RefSeq" id="NP_001085541.1">
    <property type="nucleotide sequence ID" value="NM_001092072.1"/>
</dbReference>
<dbReference type="TCDB" id="1.B.69.2.5">
    <property type="family name" value="the peroxysomal membrane porin 4 (pxmp4) family"/>
</dbReference>
<dbReference type="DNASU" id="443967"/>
<dbReference type="GeneID" id="443967"/>
<dbReference type="KEGG" id="xla:443967"/>
<dbReference type="AGR" id="Xenbase:XB-GENE-6540651"/>
<dbReference type="CTD" id="443967"/>
<dbReference type="Xenbase" id="XB-GENE-6540651">
    <property type="gene designation" value="tmem135.L"/>
</dbReference>
<dbReference type="OrthoDB" id="291792at2759"/>
<dbReference type="Proteomes" id="UP000186698">
    <property type="component" value="Chromosome 2L"/>
</dbReference>
<dbReference type="Bgee" id="443967">
    <property type="expression patterns" value="Expressed in intestine and 20 other cell types or tissues"/>
</dbReference>
<dbReference type="GO" id="GO:0031966">
    <property type="term" value="C:mitochondrial membrane"/>
    <property type="evidence" value="ECO:0007669"/>
    <property type="project" value="UniProtKB-SubCell"/>
</dbReference>
<dbReference type="GO" id="GO:0005739">
    <property type="term" value="C:mitochondrion"/>
    <property type="evidence" value="ECO:0000250"/>
    <property type="project" value="UniProtKB"/>
</dbReference>
<dbReference type="GO" id="GO:0005778">
    <property type="term" value="C:peroxisomal membrane"/>
    <property type="evidence" value="ECO:0007669"/>
    <property type="project" value="UniProtKB-SubCell"/>
</dbReference>
<dbReference type="GO" id="GO:0090140">
    <property type="term" value="P:regulation of mitochondrial fission"/>
    <property type="evidence" value="ECO:0000250"/>
    <property type="project" value="UniProtKB"/>
</dbReference>
<dbReference type="InterPro" id="IPR026749">
    <property type="entry name" value="Tmem135"/>
</dbReference>
<dbReference type="InterPro" id="IPR031926">
    <property type="entry name" value="TMEM135_N"/>
</dbReference>
<dbReference type="PANTHER" id="PTHR12459:SF15">
    <property type="entry name" value="TRANSMEMBRANE PROTEIN 135"/>
    <property type="match status" value="1"/>
</dbReference>
<dbReference type="PANTHER" id="PTHR12459">
    <property type="entry name" value="TRANSMEMBRANE PROTEIN 135-RELATED"/>
    <property type="match status" value="1"/>
</dbReference>
<dbReference type="Pfam" id="PF15982">
    <property type="entry name" value="TMEM135_C_rich"/>
    <property type="match status" value="1"/>
</dbReference>
<evidence type="ECO:0000250" key="1">
    <source>
        <dbReference type="UniProtKB" id="Q5U4F4"/>
    </source>
</evidence>
<evidence type="ECO:0000250" key="2">
    <source>
        <dbReference type="UniProtKB" id="Q9CYV5"/>
    </source>
</evidence>
<evidence type="ECO:0000255" key="3"/>
<evidence type="ECO:0000305" key="4"/>
<accession>Q6GQ39</accession>
<protein>
    <recommendedName>
        <fullName>Transmembrane protein 135</fullName>
    </recommendedName>
    <alternativeName>
        <fullName>Peroxisomal membrane protein 52</fullName>
        <shortName>PMP52</shortName>
    </alternativeName>
</protein>